<organism>
    <name type="scientific">Bacillus anthracis (strain CDC 684 / NRRL 3495)</name>
    <dbReference type="NCBI Taxonomy" id="568206"/>
    <lineage>
        <taxon>Bacteria</taxon>
        <taxon>Bacillati</taxon>
        <taxon>Bacillota</taxon>
        <taxon>Bacilli</taxon>
        <taxon>Bacillales</taxon>
        <taxon>Bacillaceae</taxon>
        <taxon>Bacillus</taxon>
        <taxon>Bacillus cereus group</taxon>
    </lineage>
</organism>
<keyword id="KW-0010">Activator</keyword>
<keyword id="KW-0369">Histidine metabolism</keyword>
<keyword id="KW-0694">RNA-binding</keyword>
<keyword id="KW-0804">Transcription</keyword>
<keyword id="KW-0805">Transcription regulation</keyword>
<proteinExistence type="inferred from homology"/>
<dbReference type="EMBL" id="CP001215">
    <property type="protein sequence ID" value="ACP17439.1"/>
    <property type="molecule type" value="Genomic_DNA"/>
</dbReference>
<dbReference type="RefSeq" id="WP_000926516.1">
    <property type="nucleotide sequence ID" value="NC_012581.1"/>
</dbReference>
<dbReference type="SMR" id="C3L981"/>
<dbReference type="GeneID" id="93007528"/>
<dbReference type="KEGG" id="bah:BAMEG_0921"/>
<dbReference type="HOGENOM" id="CLU_148478_0_0_9"/>
<dbReference type="GO" id="GO:0003729">
    <property type="term" value="F:mRNA binding"/>
    <property type="evidence" value="ECO:0007669"/>
    <property type="project" value="UniProtKB-UniRule"/>
</dbReference>
<dbReference type="GO" id="GO:0006547">
    <property type="term" value="P:L-histidine metabolic process"/>
    <property type="evidence" value="ECO:0007669"/>
    <property type="project" value="UniProtKB-UniRule"/>
</dbReference>
<dbReference type="GO" id="GO:0010628">
    <property type="term" value="P:positive regulation of gene expression"/>
    <property type="evidence" value="ECO:0007669"/>
    <property type="project" value="UniProtKB-UniRule"/>
</dbReference>
<dbReference type="FunFam" id="3.40.1510.10:FF:000001">
    <property type="entry name" value="Hut operon positive regulatory protein"/>
    <property type="match status" value="1"/>
</dbReference>
<dbReference type="Gene3D" id="3.40.1510.10">
    <property type="entry name" value="Hut operon regulatory protein HutP"/>
    <property type="match status" value="1"/>
</dbReference>
<dbReference type="HAMAP" id="MF_00779">
    <property type="entry name" value="HutP"/>
    <property type="match status" value="1"/>
</dbReference>
<dbReference type="InterPro" id="IPR015111">
    <property type="entry name" value="Regulatory_HutP"/>
</dbReference>
<dbReference type="InterPro" id="IPR023552">
    <property type="entry name" value="Regulatory_HutP_bacillales"/>
</dbReference>
<dbReference type="InterPro" id="IPR036482">
    <property type="entry name" value="Regulatory_HutP_sf"/>
</dbReference>
<dbReference type="NCBIfam" id="NF002838">
    <property type="entry name" value="PRK03065.1"/>
    <property type="match status" value="1"/>
</dbReference>
<dbReference type="Pfam" id="PF09021">
    <property type="entry name" value="HutP"/>
    <property type="match status" value="1"/>
</dbReference>
<dbReference type="SUPFAM" id="SSF111064">
    <property type="entry name" value="Hut operon positive regulatory protein HutP"/>
    <property type="match status" value="1"/>
</dbReference>
<protein>
    <recommendedName>
        <fullName evidence="1">Hut operon positive regulatory protein</fullName>
    </recommendedName>
</protein>
<evidence type="ECO:0000255" key="1">
    <source>
        <dbReference type="HAMAP-Rule" id="MF_00779"/>
    </source>
</evidence>
<sequence length="146" mass="15822">MLLQGTHRIGRMAMLLALADENESPVLSIPKGWKYCTGKVGSMNSQKVVAAMETAAKSNQVIETDVYRETHALYHAIMEALYGVTRGQIQLADVLRTVGLRFAIVRGTPYDGKKEGEWVAVALYGTIGAPVKGSEHEAIGLGINHI</sequence>
<reference key="1">
    <citation type="submission" date="2008-10" db="EMBL/GenBank/DDBJ databases">
        <title>Genome sequence of Bacillus anthracis str. CDC 684.</title>
        <authorList>
            <person name="Dodson R.J."/>
            <person name="Munk A.C."/>
            <person name="Brettin T."/>
            <person name="Bruce D."/>
            <person name="Detter C."/>
            <person name="Tapia R."/>
            <person name="Han C."/>
            <person name="Sutton G."/>
            <person name="Sims D."/>
        </authorList>
    </citation>
    <scope>NUCLEOTIDE SEQUENCE [LARGE SCALE GENOMIC DNA]</scope>
    <source>
        <strain>CDC 684 / NRRL 3495</strain>
    </source>
</reference>
<accession>C3L981</accession>
<gene>
    <name evidence="1" type="primary">hutP</name>
    <name type="ordered locus">BAMEG_0921</name>
</gene>
<feature type="chain" id="PRO_1000148458" description="Hut operon positive regulatory protein">
    <location>
        <begin position="1"/>
        <end position="146"/>
    </location>
</feature>
<comment type="function">
    <text evidence="1">Antiterminator that binds to cis-acting regulatory sequences on the mRNA in the presence of histidine, thereby suppressing transcription termination and activating the hut operon for histidine utilization.</text>
</comment>
<comment type="subunit">
    <text evidence="1">Homohexamer.</text>
</comment>
<comment type="similarity">
    <text evidence="1">Belongs to the HutP family.</text>
</comment>
<name>HUTP_BACAC</name>